<organism>
    <name type="scientific">Rhizobium johnstonii (strain DSM 114642 / LMG 32736 / 3841)</name>
    <name type="common">Rhizobium leguminosarum bv. viciae</name>
    <dbReference type="NCBI Taxonomy" id="216596"/>
    <lineage>
        <taxon>Bacteria</taxon>
        <taxon>Pseudomonadati</taxon>
        <taxon>Pseudomonadota</taxon>
        <taxon>Alphaproteobacteria</taxon>
        <taxon>Hyphomicrobiales</taxon>
        <taxon>Rhizobiaceae</taxon>
        <taxon>Rhizobium/Agrobacterium group</taxon>
        <taxon>Rhizobium</taxon>
        <taxon>Rhizobium johnstonii</taxon>
    </lineage>
</organism>
<reference key="1">
    <citation type="journal article" date="2006" name="Genome Biol.">
        <title>The genome of Rhizobium leguminosarum has recognizable core and accessory components.</title>
        <authorList>
            <person name="Young J.P.W."/>
            <person name="Crossman L.C."/>
            <person name="Johnston A.W.B."/>
            <person name="Thomson N.R."/>
            <person name="Ghazoui Z.F."/>
            <person name="Hull K.H."/>
            <person name="Wexler M."/>
            <person name="Curson A.R.J."/>
            <person name="Todd J.D."/>
            <person name="Poole P.S."/>
            <person name="Mauchline T.H."/>
            <person name="East A.K."/>
            <person name="Quail M.A."/>
            <person name="Churcher C."/>
            <person name="Arrowsmith C."/>
            <person name="Cherevach I."/>
            <person name="Chillingworth T."/>
            <person name="Clarke K."/>
            <person name="Cronin A."/>
            <person name="Davis P."/>
            <person name="Fraser A."/>
            <person name="Hance Z."/>
            <person name="Hauser H."/>
            <person name="Jagels K."/>
            <person name="Moule S."/>
            <person name="Mungall K."/>
            <person name="Norbertczak H."/>
            <person name="Rabbinowitsch E."/>
            <person name="Sanders M."/>
            <person name="Simmonds M."/>
            <person name="Whitehead S."/>
            <person name="Parkhill J."/>
        </authorList>
    </citation>
    <scope>NUCLEOTIDE SEQUENCE [LARGE SCALE GENOMIC DNA]</scope>
    <source>
        <strain>DSM 114642 / LMG 32736 / 3841</strain>
    </source>
</reference>
<comment type="function">
    <text evidence="1">Protease subunit of a proteasome-like degradation complex believed to be a general protein degrading machinery.</text>
</comment>
<comment type="catalytic activity">
    <reaction evidence="1">
        <text>ATP-dependent cleavage of peptide bonds with broad specificity.</text>
        <dbReference type="EC" id="3.4.25.2"/>
    </reaction>
</comment>
<comment type="activity regulation">
    <text evidence="1">Allosterically activated by HslU binding.</text>
</comment>
<comment type="subunit">
    <text evidence="1">A double ring-shaped homohexamer of HslV is capped on each side by a ring-shaped HslU homohexamer. The assembly of the HslU/HslV complex is dependent on binding of ATP.</text>
</comment>
<comment type="subcellular location">
    <subcellularLocation>
        <location evidence="1">Cytoplasm</location>
    </subcellularLocation>
</comment>
<comment type="similarity">
    <text evidence="1">Belongs to the peptidase T1B family. HslV subfamily.</text>
</comment>
<proteinExistence type="inferred from homology"/>
<keyword id="KW-0021">Allosteric enzyme</keyword>
<keyword id="KW-0963">Cytoplasm</keyword>
<keyword id="KW-0378">Hydrolase</keyword>
<keyword id="KW-0479">Metal-binding</keyword>
<keyword id="KW-0645">Protease</keyword>
<keyword id="KW-0915">Sodium</keyword>
<keyword id="KW-0346">Stress response</keyword>
<keyword id="KW-0888">Threonine protease</keyword>
<sequence length="175" mass="18618">MTTIITVRKGGKVVMAGDGQVSLGQTVMKGNARKVRRIGKGEVVAGFAGATADAFTLLERLEKKLEQYPGQLMRAAVELAKDWRTDKYLRNLEAMMLVADKSITLAITGNGDVLEPEHGTTAIGSGGNFALAAALALMDTDKSAEEIARRALDIAADICVYTNHNVVVELLDAEG</sequence>
<evidence type="ECO:0000255" key="1">
    <source>
        <dbReference type="HAMAP-Rule" id="MF_00248"/>
    </source>
</evidence>
<gene>
    <name evidence="1" type="primary">hslV</name>
    <name type="ordered locus">RL0049</name>
</gene>
<feature type="chain" id="PRO_0000336789" description="ATP-dependent protease subunit HslV">
    <location>
        <begin position="1"/>
        <end position="175"/>
    </location>
</feature>
<feature type="active site" evidence="1">
    <location>
        <position position="2"/>
    </location>
</feature>
<feature type="binding site" evidence="1">
    <location>
        <position position="156"/>
    </location>
    <ligand>
        <name>Na(+)</name>
        <dbReference type="ChEBI" id="CHEBI:29101"/>
    </ligand>
</feature>
<feature type="binding site" evidence="1">
    <location>
        <position position="159"/>
    </location>
    <ligand>
        <name>Na(+)</name>
        <dbReference type="ChEBI" id="CHEBI:29101"/>
    </ligand>
</feature>
<feature type="binding site" evidence="1">
    <location>
        <position position="162"/>
    </location>
    <ligand>
        <name>Na(+)</name>
        <dbReference type="ChEBI" id="CHEBI:29101"/>
    </ligand>
</feature>
<accession>Q1MNB5</accession>
<name>HSLV_RHIJ3</name>
<dbReference type="EC" id="3.4.25.2" evidence="1"/>
<dbReference type="EMBL" id="AM236080">
    <property type="protein sequence ID" value="CAK05537.1"/>
    <property type="molecule type" value="Genomic_DNA"/>
</dbReference>
<dbReference type="RefSeq" id="WP_011649873.1">
    <property type="nucleotide sequence ID" value="NC_008380.1"/>
</dbReference>
<dbReference type="SMR" id="Q1MNB5"/>
<dbReference type="MEROPS" id="T01.006"/>
<dbReference type="EnsemblBacteria" id="CAK05537">
    <property type="protein sequence ID" value="CAK05537"/>
    <property type="gene ID" value="RL0049"/>
</dbReference>
<dbReference type="KEGG" id="rle:RL0049"/>
<dbReference type="eggNOG" id="COG5405">
    <property type="taxonomic scope" value="Bacteria"/>
</dbReference>
<dbReference type="HOGENOM" id="CLU_093872_1_0_5"/>
<dbReference type="Proteomes" id="UP000006575">
    <property type="component" value="Chromosome"/>
</dbReference>
<dbReference type="GO" id="GO:0009376">
    <property type="term" value="C:HslUV protease complex"/>
    <property type="evidence" value="ECO:0007669"/>
    <property type="project" value="UniProtKB-UniRule"/>
</dbReference>
<dbReference type="GO" id="GO:0005839">
    <property type="term" value="C:proteasome core complex"/>
    <property type="evidence" value="ECO:0007669"/>
    <property type="project" value="InterPro"/>
</dbReference>
<dbReference type="GO" id="GO:0046872">
    <property type="term" value="F:metal ion binding"/>
    <property type="evidence" value="ECO:0007669"/>
    <property type="project" value="UniProtKB-KW"/>
</dbReference>
<dbReference type="GO" id="GO:0004298">
    <property type="term" value="F:threonine-type endopeptidase activity"/>
    <property type="evidence" value="ECO:0007669"/>
    <property type="project" value="UniProtKB-KW"/>
</dbReference>
<dbReference type="GO" id="GO:0051603">
    <property type="term" value="P:proteolysis involved in protein catabolic process"/>
    <property type="evidence" value="ECO:0007669"/>
    <property type="project" value="InterPro"/>
</dbReference>
<dbReference type="CDD" id="cd01913">
    <property type="entry name" value="protease_HslV"/>
    <property type="match status" value="1"/>
</dbReference>
<dbReference type="FunFam" id="3.60.20.10:FF:000002">
    <property type="entry name" value="ATP-dependent protease subunit HslV"/>
    <property type="match status" value="1"/>
</dbReference>
<dbReference type="Gene3D" id="3.60.20.10">
    <property type="entry name" value="Glutamine Phosphoribosylpyrophosphate, subunit 1, domain 1"/>
    <property type="match status" value="1"/>
</dbReference>
<dbReference type="HAMAP" id="MF_00248">
    <property type="entry name" value="HslV"/>
    <property type="match status" value="1"/>
</dbReference>
<dbReference type="InterPro" id="IPR022281">
    <property type="entry name" value="ATP-dep_Prtase_HsIV_su"/>
</dbReference>
<dbReference type="InterPro" id="IPR029055">
    <property type="entry name" value="Ntn_hydrolases_N"/>
</dbReference>
<dbReference type="InterPro" id="IPR001353">
    <property type="entry name" value="Proteasome_sua/b"/>
</dbReference>
<dbReference type="InterPro" id="IPR023333">
    <property type="entry name" value="Proteasome_suB-type"/>
</dbReference>
<dbReference type="NCBIfam" id="TIGR03692">
    <property type="entry name" value="ATP_dep_HslV"/>
    <property type="match status" value="1"/>
</dbReference>
<dbReference type="NCBIfam" id="NF003964">
    <property type="entry name" value="PRK05456.1"/>
    <property type="match status" value="1"/>
</dbReference>
<dbReference type="PANTHER" id="PTHR32194:SF7">
    <property type="entry name" value="ATP-DEPENDENT PROTEASE SUBUNIT HSLV"/>
    <property type="match status" value="1"/>
</dbReference>
<dbReference type="PANTHER" id="PTHR32194">
    <property type="entry name" value="METALLOPROTEASE TLDD"/>
    <property type="match status" value="1"/>
</dbReference>
<dbReference type="Pfam" id="PF00227">
    <property type="entry name" value="Proteasome"/>
    <property type="match status" value="1"/>
</dbReference>
<dbReference type="PIRSF" id="PIRSF039093">
    <property type="entry name" value="HslV"/>
    <property type="match status" value="1"/>
</dbReference>
<dbReference type="SUPFAM" id="SSF56235">
    <property type="entry name" value="N-terminal nucleophile aminohydrolases (Ntn hydrolases)"/>
    <property type="match status" value="1"/>
</dbReference>
<dbReference type="PROSITE" id="PS51476">
    <property type="entry name" value="PROTEASOME_BETA_2"/>
    <property type="match status" value="1"/>
</dbReference>
<protein>
    <recommendedName>
        <fullName evidence="1">ATP-dependent protease subunit HslV</fullName>
        <ecNumber evidence="1">3.4.25.2</ecNumber>
    </recommendedName>
</protein>